<feature type="chain" id="PRO_0000195630" description="Probable tryptophanase">
    <location>
        <begin position="1"/>
        <end position="448"/>
    </location>
</feature>
<feature type="modified residue" description="N6-(pyridoxal phosphate)lysine" evidence="1">
    <location>
        <position position="253"/>
    </location>
</feature>
<name>TNAA_HALSA</name>
<keyword id="KW-0456">Lyase</keyword>
<keyword id="KW-0663">Pyridoxal phosphate</keyword>
<keyword id="KW-1185">Reference proteome</keyword>
<keyword id="KW-0823">Tryptophan catabolism</keyword>
<proteinExistence type="inferred from homology"/>
<accession>Q9HMV2</accession>
<reference key="1">
    <citation type="journal article" date="2000" name="Proc. Natl. Acad. Sci. U.S.A.">
        <title>Genome sequence of Halobacterium species NRC-1.</title>
        <authorList>
            <person name="Ng W.V."/>
            <person name="Kennedy S.P."/>
            <person name="Mahairas G.G."/>
            <person name="Berquist B."/>
            <person name="Pan M."/>
            <person name="Shukla H.D."/>
            <person name="Lasky S.R."/>
            <person name="Baliga N.S."/>
            <person name="Thorsson V."/>
            <person name="Sbrogna J."/>
            <person name="Swartzell S."/>
            <person name="Weir D."/>
            <person name="Hall J."/>
            <person name="Dahl T.A."/>
            <person name="Welti R."/>
            <person name="Goo Y.A."/>
            <person name="Leithauser B."/>
            <person name="Keller K."/>
            <person name="Cruz R."/>
            <person name="Danson M.J."/>
            <person name="Hough D.W."/>
            <person name="Maddocks D.G."/>
            <person name="Jablonski P.E."/>
            <person name="Krebs M.P."/>
            <person name="Angevine C.M."/>
            <person name="Dale H."/>
            <person name="Isenbarger T.A."/>
            <person name="Peck R.F."/>
            <person name="Pohlschroder M."/>
            <person name="Spudich J.L."/>
            <person name="Jung K.-H."/>
            <person name="Alam M."/>
            <person name="Freitas T."/>
            <person name="Hou S."/>
            <person name="Daniels C.J."/>
            <person name="Dennis P.P."/>
            <person name="Omer A.D."/>
            <person name="Ebhardt H."/>
            <person name="Lowe T.M."/>
            <person name="Liang P."/>
            <person name="Riley M."/>
            <person name="Hood L."/>
            <person name="DasSarma S."/>
        </authorList>
    </citation>
    <scope>NUCLEOTIDE SEQUENCE [LARGE SCALE GENOMIC DNA]</scope>
    <source>
        <strain>ATCC 700922 / JCM 11081 / NRC-1</strain>
    </source>
</reference>
<sequence length="448" mass="48121">MRSHTATMVDRIEDTSRADREAALADAGHNVFELASDDVAVDLLTDSGTGTMSNDQWAAMLQGDEAYAGSASFEDLAVAAEDVMGFQHIIPAHQGRGAENVLYGAVLSAGDTVLNNAHFDTTRAHVAANDATPVDCPVDGARDPDTDAPFKGNFSVERARRVVDDVGADAVPVVVLTITNNSMAGQPVSIENTREVAAFADDIDATFVIDACRFAENAHFVQQREPGYEHDSVAAIAREQLSYADACVMSGKKDGLVNVGGFVGLHDDGRLHEQCRQRGILYEGFSTYGGMSGRDMAAFAVGLREAVEPPYVAERVAQVQRLADALTDRDVPIYQPAGGHAVYIDANAALPHLPREQFPGQAFVCELYREGGVRAVELGRFAFPDTDRRDLVRLALPRRTYGPDHLDHVADTAAAVCERGTDVTGLEIVSEPELTELRHFSAALQPVA</sequence>
<evidence type="ECO:0000250" key="1"/>
<evidence type="ECO:0000305" key="2"/>
<organism>
    <name type="scientific">Halobacterium salinarum (strain ATCC 700922 / JCM 11081 / NRC-1)</name>
    <name type="common">Halobacterium halobium</name>
    <dbReference type="NCBI Taxonomy" id="64091"/>
    <lineage>
        <taxon>Archaea</taxon>
        <taxon>Methanobacteriati</taxon>
        <taxon>Methanobacteriota</taxon>
        <taxon>Stenosarchaea group</taxon>
        <taxon>Halobacteria</taxon>
        <taxon>Halobacteriales</taxon>
        <taxon>Halobacteriaceae</taxon>
        <taxon>Halobacterium</taxon>
        <taxon>Halobacterium salinarum NRC-34001</taxon>
    </lineage>
</organism>
<dbReference type="EC" id="4.1.99.1"/>
<dbReference type="EMBL" id="AE004437">
    <property type="protein sequence ID" value="AAG20469.1"/>
    <property type="status" value="ALT_INIT"/>
    <property type="molecule type" value="Genomic_DNA"/>
</dbReference>
<dbReference type="PIR" id="A84388">
    <property type="entry name" value="A84388"/>
</dbReference>
<dbReference type="RefSeq" id="WP_012289493.1">
    <property type="nucleotide sequence ID" value="NC_002607.1"/>
</dbReference>
<dbReference type="SMR" id="Q9HMV2"/>
<dbReference type="STRING" id="64091.VNG_2373G"/>
<dbReference type="PaxDb" id="64091-VNG_2373G"/>
<dbReference type="KEGG" id="hal:VNG_2373G"/>
<dbReference type="PATRIC" id="fig|64091.14.peg.1837"/>
<dbReference type="HOGENOM" id="CLU_047223_0_0_2"/>
<dbReference type="InParanoid" id="Q9HMV2"/>
<dbReference type="OrthoDB" id="287201at2157"/>
<dbReference type="PhylomeDB" id="Q9HMV2"/>
<dbReference type="UniPathway" id="UPA00332">
    <property type="reaction ID" value="UER00452"/>
</dbReference>
<dbReference type="Proteomes" id="UP000000554">
    <property type="component" value="Chromosome"/>
</dbReference>
<dbReference type="GO" id="GO:0016829">
    <property type="term" value="F:lyase activity"/>
    <property type="evidence" value="ECO:0000318"/>
    <property type="project" value="GO_Central"/>
</dbReference>
<dbReference type="GO" id="GO:0009034">
    <property type="term" value="F:tryptophanase activity"/>
    <property type="evidence" value="ECO:0007669"/>
    <property type="project" value="UniProtKB-UniRule"/>
</dbReference>
<dbReference type="CDD" id="cd00617">
    <property type="entry name" value="Tnase_like"/>
    <property type="match status" value="1"/>
</dbReference>
<dbReference type="Gene3D" id="3.90.1150.10">
    <property type="entry name" value="Aspartate Aminotransferase, domain 1"/>
    <property type="match status" value="1"/>
</dbReference>
<dbReference type="Gene3D" id="3.40.640.10">
    <property type="entry name" value="Type I PLP-dependent aspartate aminotransferase-like (Major domain)"/>
    <property type="match status" value="1"/>
</dbReference>
<dbReference type="HAMAP" id="MF_00544">
    <property type="entry name" value="Tryptophanase"/>
    <property type="match status" value="1"/>
</dbReference>
<dbReference type="InterPro" id="IPR001597">
    <property type="entry name" value="ArAA_b-elim_lyase/Thr_aldolase"/>
</dbReference>
<dbReference type="InterPro" id="IPR011166">
    <property type="entry name" value="Beta-eliminating_lyase"/>
</dbReference>
<dbReference type="InterPro" id="IPR015424">
    <property type="entry name" value="PyrdxlP-dep_Trfase"/>
</dbReference>
<dbReference type="InterPro" id="IPR015421">
    <property type="entry name" value="PyrdxlP-dep_Trfase_major"/>
</dbReference>
<dbReference type="InterPro" id="IPR015422">
    <property type="entry name" value="PyrdxlP-dep_Trfase_small"/>
</dbReference>
<dbReference type="InterPro" id="IPR013440">
    <property type="entry name" value="TNase"/>
</dbReference>
<dbReference type="InterPro" id="IPR018176">
    <property type="entry name" value="Tryptophanase_CS"/>
</dbReference>
<dbReference type="NCBIfam" id="NF009709">
    <property type="entry name" value="PRK13238.1"/>
    <property type="match status" value="1"/>
</dbReference>
<dbReference type="PANTHER" id="PTHR32325">
    <property type="entry name" value="BETA-ELIMINATING LYASE-LIKE PROTEIN-RELATED"/>
    <property type="match status" value="1"/>
</dbReference>
<dbReference type="PANTHER" id="PTHR32325:SF4">
    <property type="entry name" value="TRYPTOPHANASE"/>
    <property type="match status" value="1"/>
</dbReference>
<dbReference type="Pfam" id="PF01212">
    <property type="entry name" value="Beta_elim_lyase"/>
    <property type="match status" value="1"/>
</dbReference>
<dbReference type="PIRSF" id="PIRSF001386">
    <property type="entry name" value="Trpase"/>
    <property type="match status" value="1"/>
</dbReference>
<dbReference type="SUPFAM" id="SSF53383">
    <property type="entry name" value="PLP-dependent transferases"/>
    <property type="match status" value="1"/>
</dbReference>
<dbReference type="PROSITE" id="PS00853">
    <property type="entry name" value="BETA_ELIM_LYASE"/>
    <property type="match status" value="1"/>
</dbReference>
<protein>
    <recommendedName>
        <fullName>Probable tryptophanase</fullName>
        <ecNumber>4.1.99.1</ecNumber>
    </recommendedName>
    <alternativeName>
        <fullName>L-tryptophan indole-lyase</fullName>
        <shortName>TNase</shortName>
    </alternativeName>
</protein>
<comment type="catalytic activity">
    <reaction>
        <text>L-tryptophan + H2O = indole + pyruvate + NH4(+)</text>
        <dbReference type="Rhea" id="RHEA:19553"/>
        <dbReference type="ChEBI" id="CHEBI:15361"/>
        <dbReference type="ChEBI" id="CHEBI:15377"/>
        <dbReference type="ChEBI" id="CHEBI:16881"/>
        <dbReference type="ChEBI" id="CHEBI:28938"/>
        <dbReference type="ChEBI" id="CHEBI:57912"/>
        <dbReference type="EC" id="4.1.99.1"/>
    </reaction>
</comment>
<comment type="cofactor">
    <cofactor evidence="1">
        <name>pyridoxal 5'-phosphate</name>
        <dbReference type="ChEBI" id="CHEBI:597326"/>
    </cofactor>
</comment>
<comment type="pathway">
    <text>Amino-acid degradation; L-tryptophan degradation via pyruvate pathway; indole and pyruvate from L-tryptophan: step 1/1.</text>
</comment>
<comment type="similarity">
    <text evidence="2">Belongs to the beta-eliminating lyase family.</text>
</comment>
<comment type="sequence caution" evidence="2">
    <conflict type="erroneous initiation">
        <sequence resource="EMBL-CDS" id="AAG20469"/>
    </conflict>
</comment>
<gene>
    <name type="primary">tnaA</name>
    <name type="ordered locus">VNG_2373G</name>
</gene>